<keyword id="KW-0010">Activator</keyword>
<keyword id="KW-0539">Nucleus</keyword>
<keyword id="KW-1185">Reference proteome</keyword>
<keyword id="KW-0804">Transcription</keyword>
<keyword id="KW-0805">Transcription regulation</keyword>
<evidence type="ECO:0000250" key="1"/>
<evidence type="ECO:0000256" key="2">
    <source>
        <dbReference type="SAM" id="MobiDB-lite"/>
    </source>
</evidence>
<evidence type="ECO:0000305" key="3"/>
<proteinExistence type="inferred from homology"/>
<comment type="function">
    <text evidence="1">Component of the Mediator complex, a coactivator involved in the regulated transcription of nearly all RNA polymerase II-dependent genes. Mediator functions as a bridge to convey information from gene-specific regulatory proteins to the basal RNA polymerase II transcription machinery. Mediator is recruited to promoters by direct interactions with regulatory proteins and serves as a scaffold for the assembly of a functional preinitiation complex with RNA polymerase II and the general transcription factors (By similarity).</text>
</comment>
<comment type="subunit">
    <text evidence="1">Component of the Mediator complex.</text>
</comment>
<comment type="subcellular location">
    <subcellularLocation>
        <location evidence="1">Nucleus</location>
    </subcellularLocation>
</comment>
<comment type="similarity">
    <text evidence="3">Belongs to the Mediator complex subunit 6 family.</text>
</comment>
<gene>
    <name type="primary">MED6</name>
    <name type="ordered locus">CAALFM_C306350WA</name>
    <name type="ORF">CaO19.7420</name>
</gene>
<reference key="1">
    <citation type="journal article" date="2004" name="Proc. Natl. Acad. Sci. U.S.A.">
        <title>The diploid genome sequence of Candida albicans.</title>
        <authorList>
            <person name="Jones T."/>
            <person name="Federspiel N.A."/>
            <person name="Chibana H."/>
            <person name="Dungan J."/>
            <person name="Kalman S."/>
            <person name="Magee B.B."/>
            <person name="Newport G."/>
            <person name="Thorstenson Y.R."/>
            <person name="Agabian N."/>
            <person name="Magee P.T."/>
            <person name="Davis R.W."/>
            <person name="Scherer S."/>
        </authorList>
    </citation>
    <scope>NUCLEOTIDE SEQUENCE [LARGE SCALE GENOMIC DNA]</scope>
    <source>
        <strain>SC5314 / ATCC MYA-2876</strain>
    </source>
</reference>
<reference key="2">
    <citation type="journal article" date="2007" name="Genome Biol.">
        <title>Assembly of the Candida albicans genome into sixteen supercontigs aligned on the eight chromosomes.</title>
        <authorList>
            <person name="van het Hoog M."/>
            <person name="Rast T.J."/>
            <person name="Martchenko M."/>
            <person name="Grindle S."/>
            <person name="Dignard D."/>
            <person name="Hogues H."/>
            <person name="Cuomo C."/>
            <person name="Berriman M."/>
            <person name="Scherer S."/>
            <person name="Magee B.B."/>
            <person name="Whiteway M."/>
            <person name="Chibana H."/>
            <person name="Nantel A."/>
            <person name="Magee P.T."/>
        </authorList>
    </citation>
    <scope>GENOME REANNOTATION</scope>
    <source>
        <strain>SC5314 / ATCC MYA-2876</strain>
    </source>
</reference>
<reference key="3">
    <citation type="journal article" date="2013" name="Genome Biol.">
        <title>Assembly of a phased diploid Candida albicans genome facilitates allele-specific measurements and provides a simple model for repeat and indel structure.</title>
        <authorList>
            <person name="Muzzey D."/>
            <person name="Schwartz K."/>
            <person name="Weissman J.S."/>
            <person name="Sherlock G."/>
        </authorList>
    </citation>
    <scope>NUCLEOTIDE SEQUENCE [LARGE SCALE GENOMIC DNA]</scope>
    <scope>GENOME REANNOTATION</scope>
    <source>
        <strain>SC5314 / ATCC MYA-2876</strain>
    </source>
</reference>
<dbReference type="EMBL" id="CP017625">
    <property type="protein sequence ID" value="AOW28642.1"/>
    <property type="molecule type" value="Genomic_DNA"/>
</dbReference>
<dbReference type="RefSeq" id="XP_019330879.1">
    <property type="nucleotide sequence ID" value="XM_019475334.1"/>
</dbReference>
<dbReference type="SMR" id="Q5A2Z1"/>
<dbReference type="BioGRID" id="1225366">
    <property type="interactions" value="1"/>
</dbReference>
<dbReference type="FunCoup" id="Q5A2Z1">
    <property type="interactions" value="856"/>
</dbReference>
<dbReference type="STRING" id="237561.Q5A2Z1"/>
<dbReference type="EnsemblFungi" id="C3_06350W_A-T">
    <property type="protein sequence ID" value="C3_06350W_A-T-p1"/>
    <property type="gene ID" value="C3_06350W_A"/>
</dbReference>
<dbReference type="GeneID" id="30515215"/>
<dbReference type="KEGG" id="cal:CAALFM_C306350WA"/>
<dbReference type="CGD" id="CAL0000201522">
    <property type="gene designation" value="orf19.7420"/>
</dbReference>
<dbReference type="VEuPathDB" id="FungiDB:C3_06350W_A"/>
<dbReference type="eggNOG" id="KOG3169">
    <property type="taxonomic scope" value="Eukaryota"/>
</dbReference>
<dbReference type="HOGENOM" id="CLU_077754_0_1_1"/>
<dbReference type="InParanoid" id="Q5A2Z1"/>
<dbReference type="OrthoDB" id="344220at2759"/>
<dbReference type="Proteomes" id="UP000000559">
    <property type="component" value="Chromosome 3"/>
</dbReference>
<dbReference type="GO" id="GO:0070847">
    <property type="term" value="C:core mediator complex"/>
    <property type="evidence" value="ECO:0000318"/>
    <property type="project" value="GO_Central"/>
</dbReference>
<dbReference type="GO" id="GO:0016592">
    <property type="term" value="C:mediator complex"/>
    <property type="evidence" value="ECO:0000318"/>
    <property type="project" value="GO_Central"/>
</dbReference>
<dbReference type="GO" id="GO:0003713">
    <property type="term" value="F:transcription coactivator activity"/>
    <property type="evidence" value="ECO:0000318"/>
    <property type="project" value="GO_Central"/>
</dbReference>
<dbReference type="GO" id="GO:0006357">
    <property type="term" value="P:regulation of transcription by RNA polymerase II"/>
    <property type="evidence" value="ECO:0000318"/>
    <property type="project" value="GO_Central"/>
</dbReference>
<dbReference type="FunFam" id="3.10.450.580:FF:000004">
    <property type="entry name" value="Mediator of RNA polymerase II transcription subunit 6"/>
    <property type="match status" value="1"/>
</dbReference>
<dbReference type="Gene3D" id="3.10.450.580">
    <property type="entry name" value="Mediator complex, subunit Med6"/>
    <property type="match status" value="1"/>
</dbReference>
<dbReference type="InterPro" id="IPR007018">
    <property type="entry name" value="Mediator_Med6"/>
</dbReference>
<dbReference type="InterPro" id="IPR016612">
    <property type="entry name" value="Mediator_Med6_fun"/>
</dbReference>
<dbReference type="InterPro" id="IPR038566">
    <property type="entry name" value="Mediator_Med6_sf"/>
</dbReference>
<dbReference type="PANTHER" id="PTHR13104">
    <property type="entry name" value="MED-6-RELATED"/>
    <property type="match status" value="1"/>
</dbReference>
<dbReference type="Pfam" id="PF04934">
    <property type="entry name" value="Med6"/>
    <property type="match status" value="1"/>
</dbReference>
<dbReference type="PIRSF" id="PIRSF013286">
    <property type="entry name" value="MED6_fungi"/>
    <property type="match status" value="1"/>
</dbReference>
<sequence length="263" mass="29219">MESLDEIQWKSPEFIQERGLNTNNVLEYFSLSPFYDRTSNNQVLMMQFQYQQIQIPPGVSFHQYFQSRLSEMTGIEFVIAYTKEPDFWIIRKQKRQDPQNTVTLQDYYIIGANVYQAPRIYDVLSSRLLASVLSIKNSTDLLNDMTSYHISDGGHSYINSIHGSSSKPSQSSAVSKPSSTNTGTNATTTPITLTTPSGATVPSTVSNGISTSTEIASGVFDTLLNDVVMNDDHLYIDEIPLYGEGSTLERLGLKGNKDAGLSL</sequence>
<feature type="chain" id="PRO_0000303053" description="Mediator of RNA polymerase II transcription subunit 6">
    <location>
        <begin position="1"/>
        <end position="263"/>
    </location>
</feature>
<feature type="region of interest" description="Disordered" evidence="2">
    <location>
        <begin position="159"/>
        <end position="205"/>
    </location>
</feature>
<feature type="compositionally biased region" description="Low complexity" evidence="2">
    <location>
        <begin position="164"/>
        <end position="200"/>
    </location>
</feature>
<name>MED6_CANAL</name>
<organism>
    <name type="scientific">Candida albicans (strain SC5314 / ATCC MYA-2876)</name>
    <name type="common">Yeast</name>
    <dbReference type="NCBI Taxonomy" id="237561"/>
    <lineage>
        <taxon>Eukaryota</taxon>
        <taxon>Fungi</taxon>
        <taxon>Dikarya</taxon>
        <taxon>Ascomycota</taxon>
        <taxon>Saccharomycotina</taxon>
        <taxon>Pichiomycetes</taxon>
        <taxon>Debaryomycetaceae</taxon>
        <taxon>Candida/Lodderomyces clade</taxon>
        <taxon>Candida</taxon>
    </lineage>
</organism>
<accession>Q5A2Z1</accession>
<accession>A0A1D8PKG4</accession>
<protein>
    <recommendedName>
        <fullName>Mediator of RNA polymerase II transcription subunit 6</fullName>
    </recommendedName>
    <alternativeName>
        <fullName>Mediator complex subunit 6</fullName>
    </alternativeName>
</protein>